<accession>A8AMJ7</accession>
<name>PRIB_CITK8</name>
<protein>
    <recommendedName>
        <fullName evidence="1">Replication restart protein PriB</fullName>
    </recommendedName>
</protein>
<reference key="1">
    <citation type="submission" date="2007-08" db="EMBL/GenBank/DDBJ databases">
        <authorList>
            <consortium name="The Citrobacter koseri Genome Sequencing Project"/>
            <person name="McClelland M."/>
            <person name="Sanderson E.K."/>
            <person name="Porwollik S."/>
            <person name="Spieth J."/>
            <person name="Clifton W.S."/>
            <person name="Latreille P."/>
            <person name="Courtney L."/>
            <person name="Wang C."/>
            <person name="Pepin K."/>
            <person name="Bhonagiri V."/>
            <person name="Nash W."/>
            <person name="Johnson M."/>
            <person name="Thiruvilangam P."/>
            <person name="Wilson R."/>
        </authorList>
    </citation>
    <scope>NUCLEOTIDE SEQUENCE [LARGE SCALE GENOMIC DNA]</scope>
    <source>
        <strain>ATCC BAA-895 / CDC 4225-83 / SGSC4696</strain>
    </source>
</reference>
<dbReference type="EMBL" id="CP000822">
    <property type="protein sequence ID" value="ABV14710.1"/>
    <property type="molecule type" value="Genomic_DNA"/>
</dbReference>
<dbReference type="RefSeq" id="WP_012134407.1">
    <property type="nucleotide sequence ID" value="NC_009792.1"/>
</dbReference>
<dbReference type="SMR" id="A8AMJ7"/>
<dbReference type="STRING" id="290338.CKO_03631"/>
<dbReference type="GeneID" id="89519188"/>
<dbReference type="KEGG" id="cko:CKO_03631"/>
<dbReference type="HOGENOM" id="CLU_166075_0_0_6"/>
<dbReference type="OrthoDB" id="9180733at2"/>
<dbReference type="Proteomes" id="UP000008148">
    <property type="component" value="Chromosome"/>
</dbReference>
<dbReference type="GO" id="GO:1990077">
    <property type="term" value="C:primosome complex"/>
    <property type="evidence" value="ECO:0007669"/>
    <property type="project" value="UniProtKB-KW"/>
</dbReference>
<dbReference type="GO" id="GO:0003697">
    <property type="term" value="F:single-stranded DNA binding"/>
    <property type="evidence" value="ECO:0007669"/>
    <property type="project" value="UniProtKB-UniRule"/>
</dbReference>
<dbReference type="GO" id="GO:0006269">
    <property type="term" value="P:DNA replication, synthesis of primer"/>
    <property type="evidence" value="ECO:0007669"/>
    <property type="project" value="UniProtKB-KW"/>
</dbReference>
<dbReference type="CDD" id="cd04496">
    <property type="entry name" value="SSB_OBF"/>
    <property type="match status" value="1"/>
</dbReference>
<dbReference type="FunFam" id="2.40.50.140:FF:000077">
    <property type="entry name" value="Primosomal replication protein N"/>
    <property type="match status" value="1"/>
</dbReference>
<dbReference type="Gene3D" id="2.40.50.140">
    <property type="entry name" value="Nucleic acid-binding proteins"/>
    <property type="match status" value="1"/>
</dbReference>
<dbReference type="HAMAP" id="MF_00720">
    <property type="entry name" value="PriB"/>
    <property type="match status" value="1"/>
</dbReference>
<dbReference type="InterPro" id="IPR012340">
    <property type="entry name" value="NA-bd_OB-fold"/>
</dbReference>
<dbReference type="InterPro" id="IPR000424">
    <property type="entry name" value="Primosome_PriB/ssb"/>
</dbReference>
<dbReference type="InterPro" id="IPR023646">
    <property type="entry name" value="Prisomal_replication_PriB"/>
</dbReference>
<dbReference type="NCBIfam" id="TIGR04418">
    <property type="entry name" value="PriB_gamma"/>
    <property type="match status" value="1"/>
</dbReference>
<dbReference type="Pfam" id="PF22657">
    <property type="entry name" value="SSB_1"/>
    <property type="match status" value="1"/>
</dbReference>
<dbReference type="PIRSF" id="PIRSF003135">
    <property type="entry name" value="Primosomal_n"/>
    <property type="match status" value="1"/>
</dbReference>
<dbReference type="SUPFAM" id="SSF50249">
    <property type="entry name" value="Nucleic acid-binding proteins"/>
    <property type="match status" value="1"/>
</dbReference>
<dbReference type="PROSITE" id="PS50935">
    <property type="entry name" value="SSB"/>
    <property type="match status" value="1"/>
</dbReference>
<proteinExistence type="inferred from homology"/>
<gene>
    <name evidence="1" type="primary">priB</name>
    <name type="ordered locus">CKO_03631</name>
</gene>
<comment type="function">
    <text evidence="1">Involved in the restart of stalled replication forks, which reloads the replicative helicase on sites other than the origin of replication; the PriA-PriB pathway is the major replication restart pathway. During primosome assembly it facilitates complex formation between PriA and DnaT on DNA; stabilizes PriA on DNA. Stimulates the DNA unwinding activity of PriA helicase.</text>
</comment>
<comment type="subunit">
    <text evidence="1">Homodimer. Interacts with PriA and DnaT. Component of the replication restart primosome. Primosome assembly occurs via a 'hand-off' mechanism. PriA binds to replication forks, subsequently PriB then DnaT bind; DnaT then displaces ssDNA to generate the helicase loading substrate.</text>
</comment>
<comment type="similarity">
    <text evidence="1">Belongs to the PriB family.</text>
</comment>
<feature type="chain" id="PRO_1000083272" description="Replication restart protein PriB">
    <location>
        <begin position="1"/>
        <end position="104"/>
    </location>
</feature>
<feature type="domain" description="SSB" evidence="1">
    <location>
        <begin position="1"/>
        <end position="101"/>
    </location>
</feature>
<keyword id="KW-0235">DNA replication</keyword>
<keyword id="KW-0238">DNA-binding</keyword>
<keyword id="KW-0639">Primosome</keyword>
<keyword id="KW-1185">Reference proteome</keyword>
<sequence length="104" mass="11474">MTNRLALSGTVCRMPLRKVSPSGIPHCQFVLEHRSVQEEAGFHRQAWCQMPVIVSGHENQAITHSITVGSRITVQGFISCHKAKNGLSKMVLHAEQIELIDSGD</sequence>
<evidence type="ECO:0000255" key="1">
    <source>
        <dbReference type="HAMAP-Rule" id="MF_00720"/>
    </source>
</evidence>
<organism>
    <name type="scientific">Citrobacter koseri (strain ATCC BAA-895 / CDC 4225-83 / SGSC4696)</name>
    <dbReference type="NCBI Taxonomy" id="290338"/>
    <lineage>
        <taxon>Bacteria</taxon>
        <taxon>Pseudomonadati</taxon>
        <taxon>Pseudomonadota</taxon>
        <taxon>Gammaproteobacteria</taxon>
        <taxon>Enterobacterales</taxon>
        <taxon>Enterobacteriaceae</taxon>
        <taxon>Citrobacter</taxon>
    </lineage>
</organism>